<accession>A9A7A8</accession>
<protein>
    <recommendedName>
        <fullName evidence="1">Putative HTH-type transcriptional regulatory protein MmarC6_0210</fullName>
    </recommendedName>
</protein>
<proteinExistence type="inferred from homology"/>
<organism>
    <name type="scientific">Methanococcus maripaludis (strain C6 / ATCC BAA-1332)</name>
    <dbReference type="NCBI Taxonomy" id="444158"/>
    <lineage>
        <taxon>Archaea</taxon>
        <taxon>Methanobacteriati</taxon>
        <taxon>Methanobacteriota</taxon>
        <taxon>Methanomada group</taxon>
        <taxon>Methanococci</taxon>
        <taxon>Methanococcales</taxon>
        <taxon>Methanococcaceae</taxon>
        <taxon>Methanococcus</taxon>
    </lineage>
</organism>
<dbReference type="EMBL" id="CP000867">
    <property type="protein sequence ID" value="ABX01032.1"/>
    <property type="molecule type" value="Genomic_DNA"/>
</dbReference>
<dbReference type="SMR" id="A9A7A8"/>
<dbReference type="STRING" id="444158.MmarC6_0210"/>
<dbReference type="KEGG" id="mmx:MmarC6_0210"/>
<dbReference type="eggNOG" id="arCOG04152">
    <property type="taxonomic scope" value="Archaea"/>
</dbReference>
<dbReference type="HOGENOM" id="CLU_075726_0_0_2"/>
<dbReference type="OrthoDB" id="31424at2157"/>
<dbReference type="PhylomeDB" id="A9A7A8"/>
<dbReference type="GO" id="GO:0003677">
    <property type="term" value="F:DNA binding"/>
    <property type="evidence" value="ECO:0007669"/>
    <property type="project" value="UniProtKB-KW"/>
</dbReference>
<dbReference type="GO" id="GO:0003700">
    <property type="term" value="F:DNA-binding transcription factor activity"/>
    <property type="evidence" value="ECO:0007669"/>
    <property type="project" value="UniProtKB-UniRule"/>
</dbReference>
<dbReference type="CDD" id="cd00093">
    <property type="entry name" value="HTH_XRE"/>
    <property type="match status" value="1"/>
</dbReference>
<dbReference type="Gene3D" id="1.10.260.40">
    <property type="entry name" value="lambda repressor-like DNA-binding domains"/>
    <property type="match status" value="1"/>
</dbReference>
<dbReference type="HAMAP" id="MF_00584">
    <property type="entry name" value="HTH_type_cro_C1"/>
    <property type="match status" value="1"/>
</dbReference>
<dbReference type="InterPro" id="IPR020886">
    <property type="entry name" value="Arc_TR_HTH"/>
</dbReference>
<dbReference type="InterPro" id="IPR001387">
    <property type="entry name" value="Cro/C1-type_HTH"/>
</dbReference>
<dbReference type="InterPro" id="IPR010982">
    <property type="entry name" value="Lambda_DNA-bd_dom_sf"/>
</dbReference>
<dbReference type="NCBIfam" id="NF003162">
    <property type="entry name" value="PRK04140.1"/>
    <property type="match status" value="1"/>
</dbReference>
<dbReference type="Pfam" id="PF01381">
    <property type="entry name" value="HTH_3"/>
    <property type="match status" value="1"/>
</dbReference>
<dbReference type="SMART" id="SM00530">
    <property type="entry name" value="HTH_XRE"/>
    <property type="match status" value="1"/>
</dbReference>
<dbReference type="SUPFAM" id="SSF47413">
    <property type="entry name" value="lambda repressor-like DNA-binding domains"/>
    <property type="match status" value="1"/>
</dbReference>
<dbReference type="PROSITE" id="PS50943">
    <property type="entry name" value="HTH_CROC1"/>
    <property type="match status" value="1"/>
</dbReference>
<evidence type="ECO:0000255" key="1">
    <source>
        <dbReference type="HAMAP-Rule" id="MF_00584"/>
    </source>
</evidence>
<name>Y210_METM6</name>
<reference key="1">
    <citation type="submission" date="2007-10" db="EMBL/GenBank/DDBJ databases">
        <title>Complete sequence of Methanococcus maripaludis C6.</title>
        <authorList>
            <consortium name="US DOE Joint Genome Institute"/>
            <person name="Copeland A."/>
            <person name="Lucas S."/>
            <person name="Lapidus A."/>
            <person name="Barry K."/>
            <person name="Glavina del Rio T."/>
            <person name="Dalin E."/>
            <person name="Tice H."/>
            <person name="Pitluck S."/>
            <person name="Clum A."/>
            <person name="Schmutz J."/>
            <person name="Larimer F."/>
            <person name="Land M."/>
            <person name="Hauser L."/>
            <person name="Kyrpides N."/>
            <person name="Mikhailova N."/>
            <person name="Sieprawska-Lupa M."/>
            <person name="Whitman W.B."/>
            <person name="Richardson P."/>
        </authorList>
    </citation>
    <scope>NUCLEOTIDE SEQUENCE [LARGE SCALE GENOMIC DNA]</scope>
    <source>
        <strain>C6 / ATCC BAA-1332</strain>
    </source>
</reference>
<gene>
    <name type="ordered locus">MmarC6_0210</name>
</gene>
<feature type="chain" id="PRO_1000129776" description="Putative HTH-type transcriptional regulatory protein MmarC6_0210">
    <location>
        <begin position="1"/>
        <end position="327"/>
    </location>
</feature>
<feature type="domain" description="HTH cro/C1-type" evidence="1">
    <location>
        <begin position="128"/>
        <end position="183"/>
    </location>
</feature>
<feature type="DNA-binding region" description="H-T-H motif" evidence="1">
    <location>
        <begin position="139"/>
        <end position="158"/>
    </location>
</feature>
<keyword id="KW-0238">DNA-binding</keyword>
<keyword id="KW-0804">Transcription</keyword>
<keyword id="KW-0805">Transcription regulation</keyword>
<sequence>MREVLLSECIDLLYESHFVISKPFGRSCFDLIAKKADLRFLIKILKNIDSLSTEQSEELLNIAKMLQAVPIIIGTRTRNSVMEEGAVYERYGIKAITFNTFRDQLSGEPPVVYANRGGFFVNIDGAVLRETREKLKISVGELAEISRVSRKTIYKYEQNEANPSAEVAIKIEEYLDVPLIKGINIVDYMEGLKSQKSREEAFEKILKEGEDFKIRVIDILGDMGFNLLETTKAPFDAVAEESKIEDSENQNIIFTNIQETENEEIRRKAMIVDEISKMLNSHSLLVLEKKTNENKRITSMSISELEKIGDTVDLLEFIEKRKKSKEI</sequence>